<sequence length="314" mass="35060">MIEIEKPRIETVEISEDSKFGKFVVEPLERGYGTTLGNSLRRILLSSLPGAAVKNIEIEGVLHEFSAIENVVEDVTSIIMNIKKLALKIYSDEDKTLEIDVKDEGVVTAKDIMHDSDVEILNPDLKIATVSKGGHLKMRLIANAGRGYTLAEDNNTSDLPIGVIPVDSIYTPVERVNYQVENTRVGQSTNFDKLTLDVWTDGSITPQEAISLGAKIMTEHLNIFVDLTDEAQNAEIMIEKEEDHKEKVLEMSIEELDLSVRSYNCLKRAGINSVQELADKSEADMMKVRNLGRKSLEEVKFKLEDLGLGLRKED</sequence>
<evidence type="ECO:0000255" key="1">
    <source>
        <dbReference type="HAMAP-Rule" id="MF_00059"/>
    </source>
</evidence>
<protein>
    <recommendedName>
        <fullName evidence="1">DNA-directed RNA polymerase subunit alpha</fullName>
        <shortName evidence="1">RNAP subunit alpha</shortName>
        <ecNumber evidence="1">2.7.7.6</ecNumber>
    </recommendedName>
    <alternativeName>
        <fullName evidence="1">RNA polymerase subunit alpha</fullName>
    </alternativeName>
    <alternativeName>
        <fullName evidence="1">Transcriptase subunit alpha</fullName>
    </alternativeName>
</protein>
<proteinExistence type="inferred from homology"/>
<comment type="function">
    <text evidence="1">DNA-dependent RNA polymerase catalyzes the transcription of DNA into RNA using the four ribonucleoside triphosphates as substrates.</text>
</comment>
<comment type="catalytic activity">
    <reaction evidence="1">
        <text>RNA(n) + a ribonucleoside 5'-triphosphate = RNA(n+1) + diphosphate</text>
        <dbReference type="Rhea" id="RHEA:21248"/>
        <dbReference type="Rhea" id="RHEA-COMP:14527"/>
        <dbReference type="Rhea" id="RHEA-COMP:17342"/>
        <dbReference type="ChEBI" id="CHEBI:33019"/>
        <dbReference type="ChEBI" id="CHEBI:61557"/>
        <dbReference type="ChEBI" id="CHEBI:140395"/>
        <dbReference type="EC" id="2.7.7.6"/>
    </reaction>
</comment>
<comment type="subunit">
    <text evidence="1">Homodimer. The RNAP catalytic core consists of 2 alpha, 1 beta, 1 beta' and 1 omega subunit. When a sigma factor is associated with the core the holoenzyme is formed, which can initiate transcription.</text>
</comment>
<comment type="domain">
    <text evidence="1">The N-terminal domain is essential for RNAP assembly and basal transcription, whereas the C-terminal domain is involved in interaction with transcriptional regulators and with upstream promoter elements.</text>
</comment>
<comment type="similarity">
    <text evidence="1">Belongs to the RNA polymerase alpha chain family.</text>
</comment>
<accession>B9E9L7</accession>
<organism>
    <name type="scientific">Macrococcus caseolyticus (strain JCSC5402)</name>
    <name type="common">Macrococcoides caseolyticum</name>
    <dbReference type="NCBI Taxonomy" id="458233"/>
    <lineage>
        <taxon>Bacteria</taxon>
        <taxon>Bacillati</taxon>
        <taxon>Bacillota</taxon>
        <taxon>Bacilli</taxon>
        <taxon>Bacillales</taxon>
        <taxon>Staphylococcaceae</taxon>
        <taxon>Macrococcoides</taxon>
    </lineage>
</organism>
<gene>
    <name evidence="1" type="primary">rpoA</name>
    <name type="ordered locus">MCCL_0221</name>
</gene>
<dbReference type="EC" id="2.7.7.6" evidence="1"/>
<dbReference type="EMBL" id="AP009484">
    <property type="protein sequence ID" value="BAH16928.1"/>
    <property type="molecule type" value="Genomic_DNA"/>
</dbReference>
<dbReference type="RefSeq" id="WP_012656129.1">
    <property type="nucleotide sequence ID" value="NC_011999.1"/>
</dbReference>
<dbReference type="SMR" id="B9E9L7"/>
<dbReference type="STRING" id="458233.MCCL_0221"/>
<dbReference type="GeneID" id="61130644"/>
<dbReference type="KEGG" id="mcl:MCCL_0221"/>
<dbReference type="eggNOG" id="COG0202">
    <property type="taxonomic scope" value="Bacteria"/>
</dbReference>
<dbReference type="HOGENOM" id="CLU_053084_0_1_9"/>
<dbReference type="OrthoDB" id="9805706at2"/>
<dbReference type="Proteomes" id="UP000001383">
    <property type="component" value="Chromosome"/>
</dbReference>
<dbReference type="GO" id="GO:0005737">
    <property type="term" value="C:cytoplasm"/>
    <property type="evidence" value="ECO:0007669"/>
    <property type="project" value="UniProtKB-ARBA"/>
</dbReference>
<dbReference type="GO" id="GO:0000428">
    <property type="term" value="C:DNA-directed RNA polymerase complex"/>
    <property type="evidence" value="ECO:0007669"/>
    <property type="project" value="UniProtKB-KW"/>
</dbReference>
<dbReference type="GO" id="GO:0003677">
    <property type="term" value="F:DNA binding"/>
    <property type="evidence" value="ECO:0007669"/>
    <property type="project" value="UniProtKB-UniRule"/>
</dbReference>
<dbReference type="GO" id="GO:0003899">
    <property type="term" value="F:DNA-directed RNA polymerase activity"/>
    <property type="evidence" value="ECO:0007669"/>
    <property type="project" value="UniProtKB-UniRule"/>
</dbReference>
<dbReference type="GO" id="GO:0046983">
    <property type="term" value="F:protein dimerization activity"/>
    <property type="evidence" value="ECO:0007669"/>
    <property type="project" value="InterPro"/>
</dbReference>
<dbReference type="GO" id="GO:0006351">
    <property type="term" value="P:DNA-templated transcription"/>
    <property type="evidence" value="ECO:0007669"/>
    <property type="project" value="UniProtKB-UniRule"/>
</dbReference>
<dbReference type="CDD" id="cd06928">
    <property type="entry name" value="RNAP_alpha_NTD"/>
    <property type="match status" value="1"/>
</dbReference>
<dbReference type="FunFam" id="1.10.150.20:FF:000001">
    <property type="entry name" value="DNA-directed RNA polymerase subunit alpha"/>
    <property type="match status" value="1"/>
</dbReference>
<dbReference type="FunFam" id="2.170.120.12:FF:000001">
    <property type="entry name" value="DNA-directed RNA polymerase subunit alpha"/>
    <property type="match status" value="1"/>
</dbReference>
<dbReference type="Gene3D" id="1.10.150.20">
    <property type="entry name" value="5' to 3' exonuclease, C-terminal subdomain"/>
    <property type="match status" value="1"/>
</dbReference>
<dbReference type="Gene3D" id="2.170.120.12">
    <property type="entry name" value="DNA-directed RNA polymerase, insert domain"/>
    <property type="match status" value="1"/>
</dbReference>
<dbReference type="Gene3D" id="3.30.1360.10">
    <property type="entry name" value="RNA polymerase, RBP11-like subunit"/>
    <property type="match status" value="1"/>
</dbReference>
<dbReference type="HAMAP" id="MF_00059">
    <property type="entry name" value="RNApol_bact_RpoA"/>
    <property type="match status" value="1"/>
</dbReference>
<dbReference type="InterPro" id="IPR011262">
    <property type="entry name" value="DNA-dir_RNA_pol_insert"/>
</dbReference>
<dbReference type="InterPro" id="IPR011263">
    <property type="entry name" value="DNA-dir_RNA_pol_RpoA/D/Rpb3"/>
</dbReference>
<dbReference type="InterPro" id="IPR011773">
    <property type="entry name" value="DNA-dir_RpoA"/>
</dbReference>
<dbReference type="InterPro" id="IPR036603">
    <property type="entry name" value="RBP11-like"/>
</dbReference>
<dbReference type="InterPro" id="IPR011260">
    <property type="entry name" value="RNAP_asu_C"/>
</dbReference>
<dbReference type="InterPro" id="IPR036643">
    <property type="entry name" value="RNApol_insert_sf"/>
</dbReference>
<dbReference type="NCBIfam" id="NF003513">
    <property type="entry name" value="PRK05182.1-2"/>
    <property type="match status" value="1"/>
</dbReference>
<dbReference type="NCBIfam" id="NF003515">
    <property type="entry name" value="PRK05182.2-1"/>
    <property type="match status" value="1"/>
</dbReference>
<dbReference type="NCBIfam" id="NF003519">
    <property type="entry name" value="PRK05182.2-5"/>
    <property type="match status" value="1"/>
</dbReference>
<dbReference type="NCBIfam" id="TIGR02027">
    <property type="entry name" value="rpoA"/>
    <property type="match status" value="1"/>
</dbReference>
<dbReference type="Pfam" id="PF01000">
    <property type="entry name" value="RNA_pol_A_bac"/>
    <property type="match status" value="1"/>
</dbReference>
<dbReference type="Pfam" id="PF03118">
    <property type="entry name" value="RNA_pol_A_CTD"/>
    <property type="match status" value="1"/>
</dbReference>
<dbReference type="Pfam" id="PF01193">
    <property type="entry name" value="RNA_pol_L"/>
    <property type="match status" value="1"/>
</dbReference>
<dbReference type="SMART" id="SM00662">
    <property type="entry name" value="RPOLD"/>
    <property type="match status" value="1"/>
</dbReference>
<dbReference type="SUPFAM" id="SSF47789">
    <property type="entry name" value="C-terminal domain of RNA polymerase alpha subunit"/>
    <property type="match status" value="1"/>
</dbReference>
<dbReference type="SUPFAM" id="SSF56553">
    <property type="entry name" value="Insert subdomain of RNA polymerase alpha subunit"/>
    <property type="match status" value="1"/>
</dbReference>
<dbReference type="SUPFAM" id="SSF55257">
    <property type="entry name" value="RBP11-like subunits of RNA polymerase"/>
    <property type="match status" value="1"/>
</dbReference>
<name>RPOA_MACCJ</name>
<feature type="chain" id="PRO_1000196639" description="DNA-directed RNA polymerase subunit alpha">
    <location>
        <begin position="1"/>
        <end position="314"/>
    </location>
</feature>
<feature type="region of interest" description="Alpha N-terminal domain (alpha-NTD)" evidence="1">
    <location>
        <begin position="1"/>
        <end position="228"/>
    </location>
</feature>
<feature type="region of interest" description="Alpha C-terminal domain (alpha-CTD)" evidence="1">
    <location>
        <begin position="245"/>
        <end position="314"/>
    </location>
</feature>
<reference key="1">
    <citation type="journal article" date="2009" name="J. Bacteriol.">
        <title>Complete genome sequence of Macrococcus caseolyticus strain JCSCS5402, reflecting the ancestral genome of the human-pathogenic staphylococci.</title>
        <authorList>
            <person name="Baba T."/>
            <person name="Kuwahara-Arai K."/>
            <person name="Uchiyama I."/>
            <person name="Takeuchi F."/>
            <person name="Ito T."/>
            <person name="Hiramatsu K."/>
        </authorList>
    </citation>
    <scope>NUCLEOTIDE SEQUENCE [LARGE SCALE GENOMIC DNA]</scope>
    <source>
        <strain>JCSC5402</strain>
    </source>
</reference>
<keyword id="KW-0240">DNA-directed RNA polymerase</keyword>
<keyword id="KW-0548">Nucleotidyltransferase</keyword>
<keyword id="KW-1185">Reference proteome</keyword>
<keyword id="KW-0804">Transcription</keyword>
<keyword id="KW-0808">Transferase</keyword>